<evidence type="ECO:0000255" key="1">
    <source>
        <dbReference type="HAMAP-Rule" id="MF_00145"/>
    </source>
</evidence>
<sequence>MTIRTLDDLLAEEVTGRRVLVRADLNVPLDKQTGQIADDGRIRAVLPTLSALVQAGAKVVVCSHLGRPKGSPNPVFSLRPVAGRLGELLGAPVHFAEDTVGDSARSTVADLADGQVALLENLRFNPGETSKDEAERGAFADQLAALADAYVDDAFGAVHRRHASVYDVPARLPHVAGRLVLREVEVLGTLAGEPDRPYVVVLGGSKVSDKLAVIEALLPKVDRLLVGGGMCFTFLKAQGHEVGSSLLEEEMVETCRSLLERADGKIMLPVDVVAADAFAPDAPHDTVRADGIPSKRVGLDIGPETVAGFAAALRGARTIFWNGPMGVFEMAAFAHGTRGVAEAIATSDAFTVVGGGDSAAAVRALGLDEQAFSHISTGGGASLEYLEGKTLPGIAALES</sequence>
<comment type="catalytic activity">
    <reaction evidence="1">
        <text>(2R)-3-phosphoglycerate + ATP = (2R)-3-phospho-glyceroyl phosphate + ADP</text>
        <dbReference type="Rhea" id="RHEA:14801"/>
        <dbReference type="ChEBI" id="CHEBI:30616"/>
        <dbReference type="ChEBI" id="CHEBI:57604"/>
        <dbReference type="ChEBI" id="CHEBI:58272"/>
        <dbReference type="ChEBI" id="CHEBI:456216"/>
        <dbReference type="EC" id="2.7.2.3"/>
    </reaction>
</comment>
<comment type="pathway">
    <text evidence="1">Carbohydrate degradation; glycolysis; pyruvate from D-glyceraldehyde 3-phosphate: step 2/5.</text>
</comment>
<comment type="subunit">
    <text evidence="1">Monomer.</text>
</comment>
<comment type="subcellular location">
    <subcellularLocation>
        <location evidence="1">Cytoplasm</location>
    </subcellularLocation>
</comment>
<comment type="similarity">
    <text evidence="1">Belongs to the phosphoglycerate kinase family.</text>
</comment>
<dbReference type="EC" id="2.7.2.3" evidence="1"/>
<dbReference type="EMBL" id="CP000667">
    <property type="protein sequence ID" value="ABP55534.1"/>
    <property type="molecule type" value="Genomic_DNA"/>
</dbReference>
<dbReference type="RefSeq" id="WP_012014311.1">
    <property type="nucleotide sequence ID" value="NC_009380.1"/>
</dbReference>
<dbReference type="SMR" id="A4XDR3"/>
<dbReference type="STRING" id="369723.Strop_3097"/>
<dbReference type="KEGG" id="stp:Strop_3097"/>
<dbReference type="PATRIC" id="fig|369723.5.peg.3187"/>
<dbReference type="eggNOG" id="COG0126">
    <property type="taxonomic scope" value="Bacteria"/>
</dbReference>
<dbReference type="HOGENOM" id="CLU_025427_0_2_11"/>
<dbReference type="UniPathway" id="UPA00109">
    <property type="reaction ID" value="UER00185"/>
</dbReference>
<dbReference type="Proteomes" id="UP000000235">
    <property type="component" value="Chromosome"/>
</dbReference>
<dbReference type="GO" id="GO:0005829">
    <property type="term" value="C:cytosol"/>
    <property type="evidence" value="ECO:0007669"/>
    <property type="project" value="TreeGrafter"/>
</dbReference>
<dbReference type="GO" id="GO:0043531">
    <property type="term" value="F:ADP binding"/>
    <property type="evidence" value="ECO:0007669"/>
    <property type="project" value="TreeGrafter"/>
</dbReference>
<dbReference type="GO" id="GO:0005524">
    <property type="term" value="F:ATP binding"/>
    <property type="evidence" value="ECO:0007669"/>
    <property type="project" value="UniProtKB-KW"/>
</dbReference>
<dbReference type="GO" id="GO:0004618">
    <property type="term" value="F:phosphoglycerate kinase activity"/>
    <property type="evidence" value="ECO:0007669"/>
    <property type="project" value="UniProtKB-UniRule"/>
</dbReference>
<dbReference type="GO" id="GO:0006094">
    <property type="term" value="P:gluconeogenesis"/>
    <property type="evidence" value="ECO:0007669"/>
    <property type="project" value="TreeGrafter"/>
</dbReference>
<dbReference type="GO" id="GO:0006096">
    <property type="term" value="P:glycolytic process"/>
    <property type="evidence" value="ECO:0007669"/>
    <property type="project" value="UniProtKB-UniRule"/>
</dbReference>
<dbReference type="FunFam" id="3.40.50.1260:FF:000006">
    <property type="entry name" value="Phosphoglycerate kinase"/>
    <property type="match status" value="1"/>
</dbReference>
<dbReference type="FunFam" id="3.40.50.1260:FF:000031">
    <property type="entry name" value="Phosphoglycerate kinase 1"/>
    <property type="match status" value="1"/>
</dbReference>
<dbReference type="Gene3D" id="3.40.50.1260">
    <property type="entry name" value="Phosphoglycerate kinase, N-terminal domain"/>
    <property type="match status" value="2"/>
</dbReference>
<dbReference type="HAMAP" id="MF_00145">
    <property type="entry name" value="Phosphoglyc_kinase"/>
    <property type="match status" value="1"/>
</dbReference>
<dbReference type="InterPro" id="IPR001576">
    <property type="entry name" value="Phosphoglycerate_kinase"/>
</dbReference>
<dbReference type="InterPro" id="IPR015911">
    <property type="entry name" value="Phosphoglycerate_kinase_CS"/>
</dbReference>
<dbReference type="InterPro" id="IPR015824">
    <property type="entry name" value="Phosphoglycerate_kinase_N"/>
</dbReference>
<dbReference type="InterPro" id="IPR036043">
    <property type="entry name" value="Phosphoglycerate_kinase_sf"/>
</dbReference>
<dbReference type="PANTHER" id="PTHR11406">
    <property type="entry name" value="PHOSPHOGLYCERATE KINASE"/>
    <property type="match status" value="1"/>
</dbReference>
<dbReference type="PANTHER" id="PTHR11406:SF23">
    <property type="entry name" value="PHOSPHOGLYCERATE KINASE 1, CHLOROPLASTIC-RELATED"/>
    <property type="match status" value="1"/>
</dbReference>
<dbReference type="Pfam" id="PF00162">
    <property type="entry name" value="PGK"/>
    <property type="match status" value="1"/>
</dbReference>
<dbReference type="PIRSF" id="PIRSF000724">
    <property type="entry name" value="Pgk"/>
    <property type="match status" value="1"/>
</dbReference>
<dbReference type="PRINTS" id="PR00477">
    <property type="entry name" value="PHGLYCKINASE"/>
</dbReference>
<dbReference type="SUPFAM" id="SSF53748">
    <property type="entry name" value="Phosphoglycerate kinase"/>
    <property type="match status" value="1"/>
</dbReference>
<dbReference type="PROSITE" id="PS00111">
    <property type="entry name" value="PGLYCERATE_KINASE"/>
    <property type="match status" value="1"/>
</dbReference>
<gene>
    <name evidence="1" type="primary">pgk</name>
    <name type="ordered locus">Strop_3097</name>
</gene>
<accession>A4XDR3</accession>
<organism>
    <name type="scientific">Salinispora tropica (strain ATCC BAA-916 / DSM 44818 / JCM 13857 / NBRC 105044 / CNB-440)</name>
    <dbReference type="NCBI Taxonomy" id="369723"/>
    <lineage>
        <taxon>Bacteria</taxon>
        <taxon>Bacillati</taxon>
        <taxon>Actinomycetota</taxon>
        <taxon>Actinomycetes</taxon>
        <taxon>Micromonosporales</taxon>
        <taxon>Micromonosporaceae</taxon>
        <taxon>Salinispora</taxon>
    </lineage>
</organism>
<proteinExistence type="inferred from homology"/>
<protein>
    <recommendedName>
        <fullName evidence="1">Phosphoglycerate kinase</fullName>
        <ecNumber evidence="1">2.7.2.3</ecNumber>
    </recommendedName>
</protein>
<feature type="chain" id="PRO_1000076605" description="Phosphoglycerate kinase">
    <location>
        <begin position="1"/>
        <end position="399"/>
    </location>
</feature>
<feature type="binding site" evidence="1">
    <location>
        <begin position="24"/>
        <end position="26"/>
    </location>
    <ligand>
        <name>substrate</name>
    </ligand>
</feature>
<feature type="binding site" evidence="1">
    <location>
        <position position="41"/>
    </location>
    <ligand>
        <name>substrate</name>
    </ligand>
</feature>
<feature type="binding site" evidence="1">
    <location>
        <begin position="64"/>
        <end position="67"/>
    </location>
    <ligand>
        <name>substrate</name>
    </ligand>
</feature>
<feature type="binding site" evidence="1">
    <location>
        <position position="123"/>
    </location>
    <ligand>
        <name>substrate</name>
    </ligand>
</feature>
<feature type="binding site" evidence="1">
    <location>
        <position position="160"/>
    </location>
    <ligand>
        <name>substrate</name>
    </ligand>
</feature>
<feature type="binding site" evidence="1">
    <location>
        <position position="210"/>
    </location>
    <ligand>
        <name>ATP</name>
        <dbReference type="ChEBI" id="CHEBI:30616"/>
    </ligand>
</feature>
<feature type="binding site" evidence="1">
    <location>
        <position position="298"/>
    </location>
    <ligand>
        <name>ATP</name>
        <dbReference type="ChEBI" id="CHEBI:30616"/>
    </ligand>
</feature>
<feature type="binding site" evidence="1">
    <location>
        <position position="329"/>
    </location>
    <ligand>
        <name>ATP</name>
        <dbReference type="ChEBI" id="CHEBI:30616"/>
    </ligand>
</feature>
<feature type="binding site" evidence="1">
    <location>
        <begin position="355"/>
        <end position="358"/>
    </location>
    <ligand>
        <name>ATP</name>
        <dbReference type="ChEBI" id="CHEBI:30616"/>
    </ligand>
</feature>
<name>PGK_SALTO</name>
<reference key="1">
    <citation type="journal article" date="2007" name="Proc. Natl. Acad. Sci. U.S.A.">
        <title>Genome sequencing reveals complex secondary metabolome in the marine actinomycete Salinispora tropica.</title>
        <authorList>
            <person name="Udwary D.W."/>
            <person name="Zeigler L."/>
            <person name="Asolkar R.N."/>
            <person name="Singan V."/>
            <person name="Lapidus A."/>
            <person name="Fenical W."/>
            <person name="Jensen P.R."/>
            <person name="Moore B.S."/>
        </authorList>
    </citation>
    <scope>NUCLEOTIDE SEQUENCE [LARGE SCALE GENOMIC DNA]</scope>
    <source>
        <strain>ATCC BAA-916 / DSM 44818 / JCM 13857 / NBRC 105044 / CNB-440</strain>
    </source>
</reference>
<keyword id="KW-0067">ATP-binding</keyword>
<keyword id="KW-0963">Cytoplasm</keyword>
<keyword id="KW-0324">Glycolysis</keyword>
<keyword id="KW-0418">Kinase</keyword>
<keyword id="KW-0547">Nucleotide-binding</keyword>
<keyword id="KW-1185">Reference proteome</keyword>
<keyword id="KW-0808">Transferase</keyword>